<evidence type="ECO:0000250" key="1">
    <source>
        <dbReference type="UniProtKB" id="O60016"/>
    </source>
</evidence>
<evidence type="ECO:0000255" key="2">
    <source>
        <dbReference type="PROSITE-ProRule" id="PRU00155"/>
    </source>
</evidence>
<evidence type="ECO:0000255" key="3">
    <source>
        <dbReference type="PROSITE-ProRule" id="PRU00157"/>
    </source>
</evidence>
<evidence type="ECO:0000255" key="4">
    <source>
        <dbReference type="PROSITE-ProRule" id="PRU00190"/>
    </source>
</evidence>
<evidence type="ECO:0000256" key="5">
    <source>
        <dbReference type="SAM" id="MobiDB-lite"/>
    </source>
</evidence>
<evidence type="ECO:0000269" key="6">
    <source>
    </source>
</evidence>
<evidence type="ECO:0000269" key="7">
    <source>
    </source>
</evidence>
<evidence type="ECO:0000269" key="8">
    <source>
    </source>
</evidence>
<evidence type="ECO:0000303" key="9">
    <source>
    </source>
</evidence>
<evidence type="ECO:0000305" key="10"/>
<evidence type="ECO:0000305" key="11">
    <source>
    </source>
</evidence>
<sequence>MPGARSEAGGVDNPLVLDSSDSDDNLSGLPLNGRVKRIDGNDRSYKKKSLTSMRKSTVVDLTLSDSDEAVESVNLLPGSSSTPDRAAQAGISDKQPSLRRRPRPFMSIADSSSPPENQNVISFLGNHSQEIGELPSPPLVEDRAAPNKMELGGENIAGQNNEANAAQAAVPVSGTPSLTLSSNRPQSVSGAQLVVASSSRSAINSPPRRTPSIPQQSPSSRATPCRSASIASSRSRPPTPPLPATQSTPVTVSRRLASPILSPVQAVSSAIISPTIPSIPSHASLSDPTILSPPSATSAPPNSPIPSTSTTVQTPAAALTYARPSTSAAPLPVMPISVTPATTSPAGPGPSALQSASEATKSSDQKESPRKTNSKQPSSPSSTHGRWTDTRLFHTPSNLSATSGKSSAASSRSKSRAPLSSRAAMSDNVAGPSKTTSVSSTHPPSRASPSSLPSQSQRQVHPRPPSRDGVGKREKKSKTLSSGTGQSTPSKFSLPTSDVASNQKNKSTGLNALPKKPSSTPTSSIPQRTSTLATAMAIRPFVRSPTPPSPQSSSEASRSIQTSRGAVKAAQNQDKIHPLSTALSISSHSREATTKATTLFHTTSSPPSPSQSTSAPTKSHVVWNAQKLGTTVLSSERIHLSRGKSQTSDSVVAPAASQTAASLSYPAGTSGGAREADKKAVETSFHAGPSSADFEAFVQPSTSAIAPTTVRPSVAPPEDAPVLKSGSIIHPLFRAASAIGDQNAFTKTEAVGDVLSQGSKGRASSPRITTTGAVSHLAPHVDLGSKIKPTAAPSLFASGVTTKNVDDQDSAQPQNQTPLPSAISVSSKKNHGSLSKESSIKSAASFISSSSTLGDSVSGLGRKSHHKSTQSMPQSPLPTTNTNNSSGIEVNSWLNPQPFGPSFAASHLSIHAKKKWKERERGKEREKEKVREKEKAEEENEQLRQRRIADLEKLSANLELYKRRMDVESRTRSIPRADGETRKRPPSPGISVSTDAEVRVVKRSKPTWAIAPEGGHVAPAMEKESANVNKKAADAIKINHQPASSYAPAFATPASPAKATRTPLSVTAGLGPPVNSSSSTSTPSLLSRSINLGILRDKPKDHMDDDDGDDSAGGLPVRKTGKNGAVEEQVEQVRLDLDDVSIHGSSPAAPLSIFTSRFRDVSITPSRIQKTLEESDNDVPIQRYAVKVNGKQKAQRSKDKSYGSESENDVPLNWPSRKGKGRTAPEPQDSSETQRDDDDVNLGSGDGEERPSDDDSIPVPPAPLFKDRTAHVRQPLQTLFKGGIVAKHSYQRPLAKASAVSPVPSANRPSPAPSAKADLLPQKRKRRLKKITSQQWQHIAQNSLSDVDDLLGESSKKRLSPENAEKLGADLSKLTRPRVFSIVSRSEPRTKREPIEEDNNEYFTDSDSHTSDVALFSQHPDPPPPPERIREAKRNFDTRNIDPWNRQKHTFRSNPALHRAIFEAYIMQSTSMEESGGDDIKVTNDVDADGGPPDFEFVYSDTMLYPDGIPPPELGLGCDCDGPCDPDSETCTCVKRQELYFYDLGLKGFAYDENGKIRENSASIWECNELCGCPPECMNRVIQRGRARDTGIEIFKTKEKGWGIRARSFIPSGTYIGSYTGELIREAESERRGVTYTAIGRTYVFDLDGWQIRHPPKGLEKIDKRAAELAEAVKMRARAAMRESQEDAYNAYSVDAFHYGNFTRYFNHSCDPNLAITQAYVKDFHPERPLLVIFTRRDIKKHEELCISYKGIPDDDDIPSPEPVKKKKGGKGKKQMSKTSASAHPPEMTALNSDKGLVEVKDICRCGAKNCDGRMFNYGP</sequence>
<feature type="chain" id="PRO_0000449276" description="Histone-lysine N-methyltransferase, H3 lysine-9 specific">
    <location>
        <begin position="1"/>
        <end position="1820"/>
    </location>
</feature>
<feature type="domain" description="Pre-SET" evidence="3">
    <location>
        <begin position="1516"/>
        <end position="1585"/>
    </location>
</feature>
<feature type="domain" description="SET" evidence="4">
    <location>
        <begin position="1590"/>
        <end position="1750"/>
    </location>
</feature>
<feature type="domain" description="Post-SET" evidence="2">
    <location>
        <begin position="1800"/>
        <end position="1816"/>
    </location>
</feature>
<feature type="region of interest" description="Disordered" evidence="5">
    <location>
        <begin position="1"/>
        <end position="54"/>
    </location>
</feature>
<feature type="region of interest" description="Disordered" evidence="5">
    <location>
        <begin position="74"/>
        <end position="251"/>
    </location>
</feature>
<feature type="region of interest" description="Disordered" evidence="5">
    <location>
        <begin position="284"/>
        <end position="618"/>
    </location>
</feature>
<feature type="region of interest" description="Disordered" evidence="5">
    <location>
        <begin position="634"/>
        <end position="681"/>
    </location>
</feature>
<feature type="region of interest" description="Disordered" evidence="5">
    <location>
        <begin position="804"/>
        <end position="836"/>
    </location>
</feature>
<feature type="region of interest" description="Disordered" evidence="5">
    <location>
        <begin position="850"/>
        <end position="893"/>
    </location>
</feature>
<feature type="region of interest" description="Disordered" evidence="5">
    <location>
        <begin position="911"/>
        <end position="944"/>
    </location>
</feature>
<feature type="region of interest" description="Disordered" evidence="5">
    <location>
        <begin position="966"/>
        <end position="996"/>
    </location>
</feature>
<feature type="region of interest" description="Disordered" evidence="5">
    <location>
        <begin position="1063"/>
        <end position="1126"/>
    </location>
</feature>
<feature type="region of interest" description="Disordered" evidence="5">
    <location>
        <begin position="1183"/>
        <end position="1270"/>
    </location>
</feature>
<feature type="region of interest" description="Disordered" evidence="5">
    <location>
        <begin position="1296"/>
        <end position="1335"/>
    </location>
</feature>
<feature type="region of interest" description="Disordered" evidence="5">
    <location>
        <begin position="1385"/>
        <end position="1407"/>
    </location>
</feature>
<feature type="region of interest" description="Disordered" evidence="5">
    <location>
        <begin position="1756"/>
        <end position="1794"/>
    </location>
</feature>
<feature type="compositionally biased region" description="Low complexity" evidence="5">
    <location>
        <begin position="11"/>
        <end position="31"/>
    </location>
</feature>
<feature type="compositionally biased region" description="Polar residues" evidence="5">
    <location>
        <begin position="109"/>
        <end position="129"/>
    </location>
</feature>
<feature type="compositionally biased region" description="Low complexity" evidence="5">
    <location>
        <begin position="152"/>
        <end position="169"/>
    </location>
</feature>
<feature type="compositionally biased region" description="Polar residues" evidence="5">
    <location>
        <begin position="174"/>
        <end position="204"/>
    </location>
</feature>
<feature type="compositionally biased region" description="Polar residues" evidence="5">
    <location>
        <begin position="212"/>
        <end position="222"/>
    </location>
</feature>
<feature type="compositionally biased region" description="Low complexity" evidence="5">
    <location>
        <begin position="226"/>
        <end position="236"/>
    </location>
</feature>
<feature type="compositionally biased region" description="Low complexity" evidence="5">
    <location>
        <begin position="284"/>
        <end position="311"/>
    </location>
</feature>
<feature type="compositionally biased region" description="Low complexity" evidence="5">
    <location>
        <begin position="339"/>
        <end position="352"/>
    </location>
</feature>
<feature type="compositionally biased region" description="Basic and acidic residues" evidence="5">
    <location>
        <begin position="361"/>
        <end position="370"/>
    </location>
</feature>
<feature type="compositionally biased region" description="Polar residues" evidence="5">
    <location>
        <begin position="374"/>
        <end position="385"/>
    </location>
</feature>
<feature type="compositionally biased region" description="Low complexity" evidence="5">
    <location>
        <begin position="400"/>
        <end position="424"/>
    </location>
</feature>
<feature type="compositionally biased region" description="Polar residues" evidence="5">
    <location>
        <begin position="433"/>
        <end position="442"/>
    </location>
</feature>
<feature type="compositionally biased region" description="Low complexity" evidence="5">
    <location>
        <begin position="443"/>
        <end position="459"/>
    </location>
</feature>
<feature type="compositionally biased region" description="Polar residues" evidence="5">
    <location>
        <begin position="479"/>
        <end position="510"/>
    </location>
</feature>
<feature type="compositionally biased region" description="Low complexity" evidence="5">
    <location>
        <begin position="514"/>
        <end position="531"/>
    </location>
</feature>
<feature type="compositionally biased region" description="Low complexity" evidence="5">
    <location>
        <begin position="551"/>
        <end position="563"/>
    </location>
</feature>
<feature type="compositionally biased region" description="Low complexity" evidence="5">
    <location>
        <begin position="594"/>
        <end position="618"/>
    </location>
</feature>
<feature type="compositionally biased region" description="Polar residues" evidence="5">
    <location>
        <begin position="643"/>
        <end position="662"/>
    </location>
</feature>
<feature type="compositionally biased region" description="Polar residues" evidence="5">
    <location>
        <begin position="810"/>
        <end position="827"/>
    </location>
</feature>
<feature type="compositionally biased region" description="Low complexity" evidence="5">
    <location>
        <begin position="850"/>
        <end position="861"/>
    </location>
</feature>
<feature type="compositionally biased region" description="Polar residues" evidence="5">
    <location>
        <begin position="869"/>
        <end position="893"/>
    </location>
</feature>
<feature type="compositionally biased region" description="Basic and acidic residues" evidence="5">
    <location>
        <begin position="917"/>
        <end position="944"/>
    </location>
</feature>
<feature type="compositionally biased region" description="Basic and acidic residues" evidence="5">
    <location>
        <begin position="966"/>
        <end position="983"/>
    </location>
</feature>
<feature type="compositionally biased region" description="Low complexity" evidence="5">
    <location>
        <begin position="1076"/>
        <end position="1089"/>
    </location>
</feature>
<feature type="compositionally biased region" description="Low complexity" evidence="5">
    <location>
        <begin position="1296"/>
        <end position="1320"/>
    </location>
</feature>
<feature type="compositionally biased region" description="Basic residues" evidence="5">
    <location>
        <begin position="1765"/>
        <end position="1776"/>
    </location>
</feature>
<feature type="binding site" evidence="1">
    <location>
        <position position="1518"/>
    </location>
    <ligand>
        <name>Zn(2+)</name>
        <dbReference type="ChEBI" id="CHEBI:29105"/>
        <label>1</label>
    </ligand>
</feature>
<feature type="binding site" evidence="1">
    <location>
        <position position="1518"/>
    </location>
    <ligand>
        <name>Zn(2+)</name>
        <dbReference type="ChEBI" id="CHEBI:29105"/>
        <label>2</label>
    </ligand>
</feature>
<feature type="binding site" evidence="1">
    <location>
        <position position="1520"/>
    </location>
    <ligand>
        <name>Zn(2+)</name>
        <dbReference type="ChEBI" id="CHEBI:29105"/>
        <label>1</label>
    </ligand>
</feature>
<feature type="binding site" evidence="1">
    <location>
        <position position="1524"/>
    </location>
    <ligand>
        <name>Zn(2+)</name>
        <dbReference type="ChEBI" id="CHEBI:29105"/>
        <label>1</label>
    </ligand>
</feature>
<feature type="binding site" evidence="1">
    <location>
        <position position="1524"/>
    </location>
    <ligand>
        <name>Zn(2+)</name>
        <dbReference type="ChEBI" id="CHEBI:29105"/>
        <label>3</label>
    </ligand>
</feature>
<feature type="binding site" evidence="1">
    <location>
        <position position="1531"/>
    </location>
    <ligand>
        <name>Zn(2+)</name>
        <dbReference type="ChEBI" id="CHEBI:29105"/>
        <label>1</label>
    </ligand>
</feature>
<feature type="binding site" evidence="1">
    <location>
        <position position="1533"/>
    </location>
    <ligand>
        <name>Zn(2+)</name>
        <dbReference type="ChEBI" id="CHEBI:29105"/>
        <label>2</label>
    </ligand>
</feature>
<feature type="binding site" evidence="1">
    <location>
        <position position="1567"/>
    </location>
    <ligand>
        <name>Zn(2+)</name>
        <dbReference type="ChEBI" id="CHEBI:29105"/>
        <label>2</label>
    </ligand>
</feature>
<feature type="binding site" evidence="1">
    <location>
        <position position="1567"/>
    </location>
    <ligand>
        <name>Zn(2+)</name>
        <dbReference type="ChEBI" id="CHEBI:29105"/>
        <label>3</label>
    </ligand>
</feature>
<feature type="binding site" evidence="1">
    <location>
        <position position="1571"/>
    </location>
    <ligand>
        <name>Zn(2+)</name>
        <dbReference type="ChEBI" id="CHEBI:29105"/>
        <label>2</label>
    </ligand>
</feature>
<feature type="binding site" evidence="1">
    <location>
        <position position="1573"/>
    </location>
    <ligand>
        <name>Zn(2+)</name>
        <dbReference type="ChEBI" id="CHEBI:29105"/>
        <label>3</label>
    </ligand>
</feature>
<feature type="binding site" evidence="1">
    <location>
        <position position="1577"/>
    </location>
    <ligand>
        <name>Zn(2+)</name>
        <dbReference type="ChEBI" id="CHEBI:29105"/>
        <label>3</label>
    </ligand>
</feature>
<feature type="binding site" evidence="1">
    <location>
        <begin position="1600"/>
        <end position="1602"/>
    </location>
    <ligand>
        <name>S-adenosyl-L-methionine</name>
        <dbReference type="ChEBI" id="CHEBI:59789"/>
    </ligand>
</feature>
<feature type="binding site" evidence="4">
    <location>
        <position position="1643"/>
    </location>
    <ligand>
        <name>S-adenosyl-L-methionine</name>
        <dbReference type="ChEBI" id="CHEBI:59789"/>
    </ligand>
</feature>
<feature type="binding site" evidence="4">
    <location>
        <position position="1704"/>
    </location>
    <ligand>
        <name>S-adenosyl-L-methionine</name>
        <dbReference type="ChEBI" id="CHEBI:59789"/>
    </ligand>
</feature>
<feature type="binding site" evidence="1">
    <location>
        <begin position="1707"/>
        <end position="1708"/>
    </location>
    <ligand>
        <name>S-adenosyl-L-methionine</name>
        <dbReference type="ChEBI" id="CHEBI:59789"/>
    </ligand>
</feature>
<feature type="binding site" evidence="1">
    <location>
        <position position="1710"/>
    </location>
    <ligand>
        <name>Zn(2+)</name>
        <dbReference type="ChEBI" id="CHEBI:29105"/>
        <label>4</label>
    </ligand>
</feature>
<feature type="binding site" evidence="1">
    <location>
        <position position="1804"/>
    </location>
    <ligand>
        <name>Zn(2+)</name>
        <dbReference type="ChEBI" id="CHEBI:29105"/>
        <label>4</label>
    </ligand>
</feature>
<feature type="binding site" evidence="1">
    <location>
        <position position="1806"/>
    </location>
    <ligand>
        <name>Zn(2+)</name>
        <dbReference type="ChEBI" id="CHEBI:29105"/>
        <label>4</label>
    </ligand>
</feature>
<feature type="binding site" evidence="1">
    <location>
        <position position="1811"/>
    </location>
    <ligand>
        <name>Zn(2+)</name>
        <dbReference type="ChEBI" id="CHEBI:29105"/>
        <label>4</label>
    </ligand>
</feature>
<reference key="1">
    <citation type="journal article" date="2014" name="PLoS Genet.">
        <title>Analysis of the genome and transcriptome of Cryptococcus neoformans var. grubii reveals complex RNA expression and microevolution leading to virulence attenuation.</title>
        <authorList>
            <person name="Janbon G."/>
            <person name="Ormerod K.L."/>
            <person name="Paulet D."/>
            <person name="Byrnes E.J. III"/>
            <person name="Yadav V."/>
            <person name="Chatterjee G."/>
            <person name="Mullapudi N."/>
            <person name="Hon C.-C."/>
            <person name="Billmyre R.B."/>
            <person name="Brunel F."/>
            <person name="Bahn Y.-S."/>
            <person name="Chen W."/>
            <person name="Chen Y."/>
            <person name="Chow E.W.L."/>
            <person name="Coppee J.-Y."/>
            <person name="Floyd-Averette A."/>
            <person name="Gaillardin C."/>
            <person name="Gerik K.J."/>
            <person name="Goldberg J."/>
            <person name="Gonzalez-Hilarion S."/>
            <person name="Gujja S."/>
            <person name="Hamlin J.L."/>
            <person name="Hsueh Y.-P."/>
            <person name="Ianiri G."/>
            <person name="Jones S."/>
            <person name="Kodira C.D."/>
            <person name="Kozubowski L."/>
            <person name="Lam W."/>
            <person name="Marra M."/>
            <person name="Mesner L.D."/>
            <person name="Mieczkowski P.A."/>
            <person name="Moyrand F."/>
            <person name="Nielsen K."/>
            <person name="Proux C."/>
            <person name="Rossignol T."/>
            <person name="Schein J.E."/>
            <person name="Sun S."/>
            <person name="Wollschlaeger C."/>
            <person name="Wood I.A."/>
            <person name="Zeng Q."/>
            <person name="Neuveglise C."/>
            <person name="Newlon C.S."/>
            <person name="Perfect J.R."/>
            <person name="Lodge J.K."/>
            <person name="Idnurm A."/>
            <person name="Stajich J.E."/>
            <person name="Kronstad J.W."/>
            <person name="Sanyal K."/>
            <person name="Heitman J."/>
            <person name="Fraser J.A."/>
            <person name="Cuomo C.A."/>
            <person name="Dietrich F.S."/>
        </authorList>
    </citation>
    <scope>NUCLEOTIDE SEQUENCE [LARGE SCALE GENOMIC DNA]</scope>
    <source>
        <strain>H99 / ATCC 208821 / CBS 10515 / FGSC 9487</strain>
    </source>
</reference>
<reference key="2">
    <citation type="journal article" date="2015" name="Cell">
        <title>Product binding enforces the genomic specificity of a yeast polycomb repressive complex.</title>
        <authorList>
            <person name="Dumesic P.A."/>
            <person name="Homer C.M."/>
            <person name="Moresco J.J."/>
            <person name="Pack L.R."/>
            <person name="Shanle E.K."/>
            <person name="Coyle S.M."/>
            <person name="Strahl B.D."/>
            <person name="Fujimori D.G."/>
            <person name="Yates J.R. III"/>
            <person name="Madhani H.D."/>
        </authorList>
    </citation>
    <scope>FUNCTION</scope>
</reference>
<reference key="3">
    <citation type="journal article" date="2018" name="Sci. Rep.">
        <title>HDAC genes play distinct and redundant roles in Cryptococcus neoformans virulence.</title>
        <authorList>
            <person name="Brandao F."/>
            <person name="Esher S.K."/>
            <person name="Ost K.S."/>
            <person name="Pianalto K."/>
            <person name="Nichols C.B."/>
            <person name="Fernandes L."/>
            <person name="Bocca A.L."/>
            <person name="Pocas-Fonseca M.J."/>
            <person name="Alspaugh J.A."/>
        </authorList>
    </citation>
    <scope>INDUCTION</scope>
</reference>
<reference key="4">
    <citation type="journal article" date="2020" name="Cell">
        <title>Evolutionary Persistence of DNA Methylation for Millions of Years after Ancient Loss of a De Novo Methyltransferase.</title>
        <authorList>
            <person name="Catania S."/>
            <person name="Dumesic P.A."/>
            <person name="Pimentel H."/>
            <person name="Nasif A."/>
            <person name="Stoddard C.I."/>
            <person name="Burke J.E."/>
            <person name="Diedrich J.K."/>
            <person name="Cook S."/>
            <person name="Shea T."/>
            <person name="Geinger E."/>
            <person name="Lintner R."/>
            <person name="Yates J.R. III"/>
            <person name="Hajkova P."/>
            <person name="Narlikar G.J."/>
            <person name="Cuomo C.A."/>
            <person name="Pritchard J.K."/>
            <person name="Madhani H.D."/>
        </authorList>
    </citation>
    <scope>DISRUPTION PHENOTYPE</scope>
</reference>
<dbReference type="EC" id="2.1.1.-" evidence="11"/>
<dbReference type="EC" id="2.1.1.367" evidence="11"/>
<dbReference type="EMBL" id="CP003833">
    <property type="protein sequence ID" value="AFR98832.2"/>
    <property type="molecule type" value="Genomic_DNA"/>
</dbReference>
<dbReference type="RefSeq" id="XP_012053594.1">
    <property type="nucleotide sequence ID" value="XM_012198204.1"/>
</dbReference>
<dbReference type="SMR" id="J9VWH9"/>
<dbReference type="GeneID" id="23888722"/>
<dbReference type="KEGG" id="cng:CNAG_05404"/>
<dbReference type="VEuPathDB" id="FungiDB:CNAG_05404"/>
<dbReference type="OrthoDB" id="8580at5206"/>
<dbReference type="Proteomes" id="UP000010091">
    <property type="component" value="Chromosome 14"/>
</dbReference>
<dbReference type="GO" id="GO:0005694">
    <property type="term" value="C:chromosome"/>
    <property type="evidence" value="ECO:0007669"/>
    <property type="project" value="UniProtKB-SubCell"/>
</dbReference>
<dbReference type="GO" id="GO:0005634">
    <property type="term" value="C:nucleus"/>
    <property type="evidence" value="ECO:0007669"/>
    <property type="project" value="UniProtKB-SubCell"/>
</dbReference>
<dbReference type="GO" id="GO:0140947">
    <property type="term" value="F:histone H3K9me2 methyltransferase activity"/>
    <property type="evidence" value="ECO:0007669"/>
    <property type="project" value="RHEA"/>
</dbReference>
<dbReference type="GO" id="GO:0008270">
    <property type="term" value="F:zinc ion binding"/>
    <property type="evidence" value="ECO:0007669"/>
    <property type="project" value="InterPro"/>
</dbReference>
<dbReference type="GO" id="GO:0032259">
    <property type="term" value="P:methylation"/>
    <property type="evidence" value="ECO:0007669"/>
    <property type="project" value="UniProtKB-KW"/>
</dbReference>
<dbReference type="Gene3D" id="2.170.270.10">
    <property type="entry name" value="SET domain"/>
    <property type="match status" value="1"/>
</dbReference>
<dbReference type="InterPro" id="IPR050973">
    <property type="entry name" value="H3K9_Histone-Lys_N-MTase"/>
</dbReference>
<dbReference type="InterPro" id="IPR003616">
    <property type="entry name" value="Post-SET_dom"/>
</dbReference>
<dbReference type="InterPro" id="IPR007728">
    <property type="entry name" value="Pre-SET_dom"/>
</dbReference>
<dbReference type="InterPro" id="IPR001214">
    <property type="entry name" value="SET_dom"/>
</dbReference>
<dbReference type="InterPro" id="IPR046341">
    <property type="entry name" value="SET_dom_sf"/>
</dbReference>
<dbReference type="PANTHER" id="PTHR46223:SF3">
    <property type="entry name" value="HISTONE-LYSINE N-METHYLTRANSFERASE SET-23"/>
    <property type="match status" value="1"/>
</dbReference>
<dbReference type="PANTHER" id="PTHR46223">
    <property type="entry name" value="HISTONE-LYSINE N-METHYLTRANSFERASE SUV39H"/>
    <property type="match status" value="1"/>
</dbReference>
<dbReference type="Pfam" id="PF05033">
    <property type="entry name" value="Pre-SET"/>
    <property type="match status" value="1"/>
</dbReference>
<dbReference type="Pfam" id="PF00856">
    <property type="entry name" value="SET"/>
    <property type="match status" value="1"/>
</dbReference>
<dbReference type="SMART" id="SM00468">
    <property type="entry name" value="PreSET"/>
    <property type="match status" value="1"/>
</dbReference>
<dbReference type="SMART" id="SM00317">
    <property type="entry name" value="SET"/>
    <property type="match status" value="1"/>
</dbReference>
<dbReference type="SUPFAM" id="SSF82199">
    <property type="entry name" value="SET domain"/>
    <property type="match status" value="1"/>
</dbReference>
<dbReference type="PROSITE" id="PS50868">
    <property type="entry name" value="POST_SET"/>
    <property type="match status" value="1"/>
</dbReference>
<dbReference type="PROSITE" id="PS50867">
    <property type="entry name" value="PRE_SET"/>
    <property type="match status" value="1"/>
</dbReference>
<dbReference type="PROSITE" id="PS50280">
    <property type="entry name" value="SET"/>
    <property type="match status" value="1"/>
</dbReference>
<gene>
    <name evidence="9" type="primary">CLR4</name>
    <name type="ORF">CNAG_05404</name>
</gene>
<protein>
    <recommendedName>
        <fullName evidence="10">Histone-lysine N-methyltransferase, H3 lysine-9 specific</fullName>
        <ecNumber evidence="11">2.1.1.-</ecNumber>
        <ecNumber evidence="11">2.1.1.367</ecNumber>
    </recommendedName>
    <alternativeName>
        <fullName>Histone H3-K9 methyltransferase</fullName>
        <shortName>H3-K9-HMTase</shortName>
    </alternativeName>
</protein>
<proteinExistence type="evidence at transcript level"/>
<keyword id="KW-0158">Chromosome</keyword>
<keyword id="KW-0479">Metal-binding</keyword>
<keyword id="KW-0489">Methyltransferase</keyword>
<keyword id="KW-0539">Nucleus</keyword>
<keyword id="KW-0949">S-adenosyl-L-methionine</keyword>
<keyword id="KW-0808">Transferase</keyword>
<keyword id="KW-0862">Zinc</keyword>
<comment type="function">
    <text evidence="1 6 11">Histone methyltransferase that specifically dimethylates histone H3 to form H3K9me2 (PubMed:25533783). H3K9me2 represents a specific tag for epigenetic transcriptional repression by recruiting HP1 proteins to methylated histones (By similarity). Mainly functions in heterochromatin regions, thereby playing a central role in the establishment of constitutive heterochromatin at centromeric regions (Probable).</text>
</comment>
<comment type="catalytic activity">
    <reaction evidence="11">
        <text>N(6)-methyl-L-lysyl(9)-[histone H3] + S-adenosyl-L-methionine = N(6),N(6)-dimethyl-L-lysyl(9)-[histone H3] + S-adenosyl-L-homocysteine + H(+)</text>
        <dbReference type="Rhea" id="RHEA:60284"/>
        <dbReference type="Rhea" id="RHEA-COMP:15541"/>
        <dbReference type="Rhea" id="RHEA-COMP:15542"/>
        <dbReference type="ChEBI" id="CHEBI:15378"/>
        <dbReference type="ChEBI" id="CHEBI:57856"/>
        <dbReference type="ChEBI" id="CHEBI:59789"/>
        <dbReference type="ChEBI" id="CHEBI:61929"/>
        <dbReference type="ChEBI" id="CHEBI:61976"/>
    </reaction>
</comment>
<comment type="catalytic activity">
    <reaction evidence="11">
        <text>L-lysyl(9)-[histone H3] + S-adenosyl-L-methionine = N(6)-methyl-L-lysyl(9)-[histone H3] + S-adenosyl-L-homocysteine + H(+)</text>
        <dbReference type="Rhea" id="RHEA:60280"/>
        <dbReference type="Rhea" id="RHEA-COMP:15542"/>
        <dbReference type="Rhea" id="RHEA-COMP:15546"/>
        <dbReference type="ChEBI" id="CHEBI:15378"/>
        <dbReference type="ChEBI" id="CHEBI:29969"/>
        <dbReference type="ChEBI" id="CHEBI:57856"/>
        <dbReference type="ChEBI" id="CHEBI:59789"/>
        <dbReference type="ChEBI" id="CHEBI:61929"/>
        <dbReference type="EC" id="2.1.1.367"/>
    </reaction>
</comment>
<comment type="subcellular location">
    <subcellularLocation>
        <location evidence="1">Nucleus</location>
    </subcellularLocation>
    <subcellularLocation>
        <location evidence="1">Chromosome</location>
    </subcellularLocation>
</comment>
<comment type="induction">
    <text evidence="7">Transcriptionally repressed in an HDA1-dependent manner.</text>
</comment>
<comment type="domain">
    <text evidence="1">In the pre-SET domain, Cys residues bind 3 zinc ions that are arranged in a triangular cluster; some of these Cys residues contribute to the binding of two zinc ions within the cluster.</text>
</comment>
<comment type="disruption phenotype">
    <text evidence="8">Severely decreases localization of DMT5 to DNA (PubMed:31955845). Decreases methylation of the fifth carbon of cytosine (5mC) in DNA; simultaneous disruption of UHF1 exacerbates the effect (PubMed:31955845).</text>
</comment>
<comment type="similarity">
    <text evidence="4">Belongs to the class V-like SAM-binding methyltransferase superfamily. Histone-lysine methyltransferase family. Suvar3-9 subfamily.</text>
</comment>
<organism>
    <name type="scientific">Cryptococcus neoformans var. grubii serotype A (strain H99 / ATCC 208821 / CBS 10515 / FGSC 9487)</name>
    <name type="common">Filobasidiella neoformans var. grubii</name>
    <dbReference type="NCBI Taxonomy" id="235443"/>
    <lineage>
        <taxon>Eukaryota</taxon>
        <taxon>Fungi</taxon>
        <taxon>Dikarya</taxon>
        <taxon>Basidiomycota</taxon>
        <taxon>Agaricomycotina</taxon>
        <taxon>Tremellomycetes</taxon>
        <taxon>Tremellales</taxon>
        <taxon>Cryptococcaceae</taxon>
        <taxon>Cryptococcus</taxon>
        <taxon>Cryptococcus neoformans species complex</taxon>
    </lineage>
</organism>
<name>CLR4_CRYNH</name>
<accession>J9VWH9</accession>